<sequence>MSQNTLKVHDLNEDAEFDENGVEAFDEKALSEEEPSDNDLAEEELLSQGATQRVLDATQLYLGEIGYSPLLTAEEEVYFARRALRGDVASRRRMIESNLRLVVKIARRYGNRGLALLDLIEEGNLGLIRAVEKFDPERGFRFSTYATWWIRQTIERAIMNQTRTIRLPIHIVKELNVYLRTARELSHKLDHEPSAEEIAEQLDKPVDDVSRMLRLNERITSVDTPLGGDSEKALLDILADEKENGPEDTTQDDDMKQSIVKWLFELNAKQREVLARRFGLLGYEAATLEDVGREIGLTRERVRQIQVEGLRRLREILQTQGLNIEALFRE</sequence>
<protein>
    <recommendedName>
        <fullName evidence="1">RNA polymerase sigma factor RpoS</fullName>
    </recommendedName>
    <alternativeName>
        <fullName evidence="1">Sigma S</fullName>
    </alternativeName>
    <alternativeName>
        <fullName evidence="1">Sigma-38</fullName>
    </alternativeName>
</protein>
<name>RPOS_SALDU</name>
<reference key="1">
    <citation type="journal article" date="1997" name="J. Bacteriol.">
        <title>Plasmid virulence gene expression induced by short-chain fatty acids in Salmonella dublin: identification of rpoS-dependent and rpo-S-independent mechanisms.</title>
        <authorList>
            <person name="El-Gedaily A."/>
            <person name="Paesold G."/>
            <person name="Chen C.Y."/>
            <person name="Guiney D.G."/>
            <person name="Krause M.W."/>
        </authorList>
    </citation>
    <scope>NUCLEOTIDE SEQUENCE [GENOMIC DNA]</scope>
    <source>
        <strain>Lane</strain>
    </source>
</reference>
<accession>P0A2E7</accession>
<accession>P37400</accession>
<accession>P39699</accession>
<accession>Q56132</accession>
<accession>Q93V26</accession>
<accession>Q9RN87</accession>
<accession>Q9RN91</accession>
<accession>Q9RN92</accession>
<accession>Q9RN93</accession>
<gene>
    <name evidence="1" type="primary">rpoS</name>
    <name type="synonym">katF</name>
</gene>
<dbReference type="EMBL" id="X82129">
    <property type="protein sequence ID" value="CAA57640.1"/>
    <property type="molecule type" value="Genomic_DNA"/>
</dbReference>
<dbReference type="RefSeq" id="WP_000081498.1">
    <property type="nucleotide sequence ID" value="NZ_VDCP01000001.1"/>
</dbReference>
<dbReference type="SMR" id="P0A2E7"/>
<dbReference type="GeneID" id="89547518"/>
<dbReference type="PATRIC" id="fig|98360.39.peg.2647"/>
<dbReference type="OMA" id="RVQREFN"/>
<dbReference type="GO" id="GO:0005737">
    <property type="term" value="C:cytoplasm"/>
    <property type="evidence" value="ECO:0007669"/>
    <property type="project" value="UniProtKB-SubCell"/>
</dbReference>
<dbReference type="GO" id="GO:0003677">
    <property type="term" value="F:DNA binding"/>
    <property type="evidence" value="ECO:0007669"/>
    <property type="project" value="UniProtKB-UniRule"/>
</dbReference>
<dbReference type="GO" id="GO:0016987">
    <property type="term" value="F:sigma factor activity"/>
    <property type="evidence" value="ECO:0007669"/>
    <property type="project" value="UniProtKB-UniRule"/>
</dbReference>
<dbReference type="GO" id="GO:0006352">
    <property type="term" value="P:DNA-templated transcription initiation"/>
    <property type="evidence" value="ECO:0007669"/>
    <property type="project" value="UniProtKB-UniRule"/>
</dbReference>
<dbReference type="CDD" id="cd06171">
    <property type="entry name" value="Sigma70_r4"/>
    <property type="match status" value="1"/>
</dbReference>
<dbReference type="FunFam" id="1.10.10.10:FF:000044">
    <property type="entry name" value="RNA polymerase sigma factor RpoS"/>
    <property type="match status" value="1"/>
</dbReference>
<dbReference type="FunFam" id="1.10.10.10:FF:000046">
    <property type="entry name" value="RNA polymerase sigma factor RpoS"/>
    <property type="match status" value="1"/>
</dbReference>
<dbReference type="FunFam" id="1.10.601.10:FF:000001">
    <property type="entry name" value="RNA polymerase sigma factor SigA"/>
    <property type="match status" value="1"/>
</dbReference>
<dbReference type="Gene3D" id="1.10.601.10">
    <property type="entry name" value="RNA Polymerase Primary Sigma Factor"/>
    <property type="match status" value="1"/>
</dbReference>
<dbReference type="Gene3D" id="1.10.10.10">
    <property type="entry name" value="Winged helix-like DNA-binding domain superfamily/Winged helix DNA-binding domain"/>
    <property type="match status" value="2"/>
</dbReference>
<dbReference type="HAMAP" id="MF_00959">
    <property type="entry name" value="Sigma70_RpoS"/>
    <property type="match status" value="1"/>
</dbReference>
<dbReference type="InterPro" id="IPR014284">
    <property type="entry name" value="RNA_pol_sigma-70_dom"/>
</dbReference>
<dbReference type="InterPro" id="IPR000943">
    <property type="entry name" value="RNA_pol_sigma70"/>
</dbReference>
<dbReference type="InterPro" id="IPR009042">
    <property type="entry name" value="RNA_pol_sigma70_r1_2"/>
</dbReference>
<dbReference type="InterPro" id="IPR007627">
    <property type="entry name" value="RNA_pol_sigma70_r2"/>
</dbReference>
<dbReference type="InterPro" id="IPR007624">
    <property type="entry name" value="RNA_pol_sigma70_r3"/>
</dbReference>
<dbReference type="InterPro" id="IPR007630">
    <property type="entry name" value="RNA_pol_sigma70_r4"/>
</dbReference>
<dbReference type="InterPro" id="IPR013325">
    <property type="entry name" value="RNA_pol_sigma_r2"/>
</dbReference>
<dbReference type="InterPro" id="IPR013324">
    <property type="entry name" value="RNA_pol_sigma_r3/r4-like"/>
</dbReference>
<dbReference type="InterPro" id="IPR012761">
    <property type="entry name" value="RNA_pol_sigma_RpoS"/>
</dbReference>
<dbReference type="InterPro" id="IPR050239">
    <property type="entry name" value="Sigma-70_RNA_pol_init_factors"/>
</dbReference>
<dbReference type="InterPro" id="IPR036388">
    <property type="entry name" value="WH-like_DNA-bd_sf"/>
</dbReference>
<dbReference type="NCBIfam" id="NF004207">
    <property type="entry name" value="PRK05657.1"/>
    <property type="match status" value="1"/>
</dbReference>
<dbReference type="NCBIfam" id="TIGR02394">
    <property type="entry name" value="rpoS_proteo"/>
    <property type="match status" value="1"/>
</dbReference>
<dbReference type="NCBIfam" id="TIGR02937">
    <property type="entry name" value="sigma70-ECF"/>
    <property type="match status" value="1"/>
</dbReference>
<dbReference type="PANTHER" id="PTHR30603">
    <property type="entry name" value="RNA POLYMERASE SIGMA FACTOR RPO"/>
    <property type="match status" value="1"/>
</dbReference>
<dbReference type="PANTHER" id="PTHR30603:SF67">
    <property type="entry name" value="RNA POLYMERASE SIGMA FACTOR RPOS"/>
    <property type="match status" value="1"/>
</dbReference>
<dbReference type="Pfam" id="PF00140">
    <property type="entry name" value="Sigma70_r1_2"/>
    <property type="match status" value="1"/>
</dbReference>
<dbReference type="Pfam" id="PF04542">
    <property type="entry name" value="Sigma70_r2"/>
    <property type="match status" value="1"/>
</dbReference>
<dbReference type="Pfam" id="PF04539">
    <property type="entry name" value="Sigma70_r3"/>
    <property type="match status" value="1"/>
</dbReference>
<dbReference type="Pfam" id="PF04545">
    <property type="entry name" value="Sigma70_r4"/>
    <property type="match status" value="1"/>
</dbReference>
<dbReference type="PRINTS" id="PR00046">
    <property type="entry name" value="SIGMA70FCT"/>
</dbReference>
<dbReference type="SUPFAM" id="SSF88946">
    <property type="entry name" value="Sigma2 domain of RNA polymerase sigma factors"/>
    <property type="match status" value="1"/>
</dbReference>
<dbReference type="SUPFAM" id="SSF88659">
    <property type="entry name" value="Sigma3 and sigma4 domains of RNA polymerase sigma factors"/>
    <property type="match status" value="2"/>
</dbReference>
<dbReference type="PROSITE" id="PS00715">
    <property type="entry name" value="SIGMA70_1"/>
    <property type="match status" value="1"/>
</dbReference>
<dbReference type="PROSITE" id="PS00716">
    <property type="entry name" value="SIGMA70_2"/>
    <property type="match status" value="1"/>
</dbReference>
<feature type="chain" id="PRO_0000093971" description="RNA polymerase sigma factor RpoS">
    <location>
        <begin position="1"/>
        <end position="330"/>
    </location>
</feature>
<feature type="DNA-binding region" description="H-T-H motif" evidence="1">
    <location>
        <begin position="288"/>
        <end position="307"/>
    </location>
</feature>
<feature type="region of interest" description="Sigma-70 factor domain-1" evidence="1">
    <location>
        <begin position="56"/>
        <end position="89"/>
    </location>
</feature>
<feature type="region of interest" description="Sigma-70 factor domain-2" evidence="1">
    <location>
        <begin position="94"/>
        <end position="164"/>
    </location>
</feature>
<feature type="region of interest" description="Sigma-70 factor domain-3" evidence="1">
    <location>
        <begin position="174"/>
        <end position="249"/>
    </location>
</feature>
<feature type="region of interest" description="Sigma-70 factor domain-4" evidence="1">
    <location>
        <begin position="262"/>
        <end position="315"/>
    </location>
</feature>
<feature type="short sequence motif" description="Interaction with polymerase core subunit RpoC">
    <location>
        <begin position="118"/>
        <end position="121"/>
    </location>
</feature>
<keyword id="KW-0963">Cytoplasm</keyword>
<keyword id="KW-0238">DNA-binding</keyword>
<keyword id="KW-0731">Sigma factor</keyword>
<keyword id="KW-0804">Transcription</keyword>
<keyword id="KW-0805">Transcription regulation</keyword>
<organism>
    <name type="scientific">Salmonella dublin</name>
    <dbReference type="NCBI Taxonomy" id="98360"/>
    <lineage>
        <taxon>Bacteria</taxon>
        <taxon>Pseudomonadati</taxon>
        <taxon>Pseudomonadota</taxon>
        <taxon>Gammaproteobacteria</taxon>
        <taxon>Enterobacterales</taxon>
        <taxon>Enterobacteriaceae</taxon>
        <taxon>Salmonella</taxon>
    </lineage>
</organism>
<evidence type="ECO:0000255" key="1">
    <source>
        <dbReference type="HAMAP-Rule" id="MF_00959"/>
    </source>
</evidence>
<proteinExistence type="inferred from homology"/>
<comment type="function">
    <text evidence="1">Sigma factors are initiation factors that promote the attachment of RNA polymerase to specific initiation sites and are then released. This sigma factor is the master transcriptional regulator of the stationary phase and the general stress response.</text>
</comment>
<comment type="subunit">
    <text evidence="1">Interacts with the RNA polymerase core enzyme.</text>
</comment>
<comment type="subcellular location">
    <subcellularLocation>
        <location evidence="1">Cytoplasm</location>
    </subcellularLocation>
</comment>
<comment type="similarity">
    <text evidence="1">Belongs to the sigma-70 factor family. RpoS subfamily.</text>
</comment>